<dbReference type="EC" id="2.1.1.199" evidence="1"/>
<dbReference type="EMBL" id="CP000554">
    <property type="protein sequence ID" value="ABM79453.1"/>
    <property type="molecule type" value="Genomic_DNA"/>
</dbReference>
<dbReference type="RefSeq" id="WP_011827296.1">
    <property type="nucleotide sequence ID" value="NC_008820.1"/>
</dbReference>
<dbReference type="SMR" id="A2CD93"/>
<dbReference type="STRING" id="59922.P9303_27231"/>
<dbReference type="KEGG" id="pmf:P9303_27231"/>
<dbReference type="HOGENOM" id="CLU_038422_3_0_3"/>
<dbReference type="BioCyc" id="PMAR59922:G1G80-2389-MONOMER"/>
<dbReference type="Proteomes" id="UP000002274">
    <property type="component" value="Chromosome"/>
</dbReference>
<dbReference type="GO" id="GO:0005737">
    <property type="term" value="C:cytoplasm"/>
    <property type="evidence" value="ECO:0007669"/>
    <property type="project" value="UniProtKB-SubCell"/>
</dbReference>
<dbReference type="GO" id="GO:0071424">
    <property type="term" value="F:rRNA (cytosine-N4-)-methyltransferase activity"/>
    <property type="evidence" value="ECO:0007669"/>
    <property type="project" value="UniProtKB-UniRule"/>
</dbReference>
<dbReference type="GO" id="GO:0070475">
    <property type="term" value="P:rRNA base methylation"/>
    <property type="evidence" value="ECO:0007669"/>
    <property type="project" value="UniProtKB-UniRule"/>
</dbReference>
<dbReference type="Gene3D" id="1.10.150.170">
    <property type="entry name" value="Putative methyltransferase TM0872, insert domain"/>
    <property type="match status" value="1"/>
</dbReference>
<dbReference type="Gene3D" id="3.40.50.150">
    <property type="entry name" value="Vaccinia Virus protein VP39"/>
    <property type="match status" value="1"/>
</dbReference>
<dbReference type="HAMAP" id="MF_01007">
    <property type="entry name" value="16SrRNA_methyltr_H"/>
    <property type="match status" value="1"/>
</dbReference>
<dbReference type="InterPro" id="IPR002903">
    <property type="entry name" value="RsmH"/>
</dbReference>
<dbReference type="InterPro" id="IPR023397">
    <property type="entry name" value="SAM-dep_MeTrfase_MraW_recog"/>
</dbReference>
<dbReference type="InterPro" id="IPR029063">
    <property type="entry name" value="SAM-dependent_MTases_sf"/>
</dbReference>
<dbReference type="NCBIfam" id="TIGR00006">
    <property type="entry name" value="16S rRNA (cytosine(1402)-N(4))-methyltransferase RsmH"/>
    <property type="match status" value="1"/>
</dbReference>
<dbReference type="PANTHER" id="PTHR11265:SF0">
    <property type="entry name" value="12S RRNA N4-METHYLCYTIDINE METHYLTRANSFERASE"/>
    <property type="match status" value="1"/>
</dbReference>
<dbReference type="PANTHER" id="PTHR11265">
    <property type="entry name" value="S-ADENOSYL-METHYLTRANSFERASE MRAW"/>
    <property type="match status" value="1"/>
</dbReference>
<dbReference type="Pfam" id="PF01795">
    <property type="entry name" value="Methyltransf_5"/>
    <property type="match status" value="1"/>
</dbReference>
<dbReference type="PIRSF" id="PIRSF004486">
    <property type="entry name" value="MraW"/>
    <property type="match status" value="1"/>
</dbReference>
<dbReference type="SUPFAM" id="SSF81799">
    <property type="entry name" value="Putative methyltransferase TM0872, insert domain"/>
    <property type="match status" value="1"/>
</dbReference>
<dbReference type="SUPFAM" id="SSF53335">
    <property type="entry name" value="S-adenosyl-L-methionine-dependent methyltransferases"/>
    <property type="match status" value="1"/>
</dbReference>
<gene>
    <name evidence="1" type="primary">rsmH</name>
    <name type="synonym">mraW</name>
    <name type="ordered locus">P9303_27231</name>
</gene>
<keyword id="KW-0963">Cytoplasm</keyword>
<keyword id="KW-0489">Methyltransferase</keyword>
<keyword id="KW-0698">rRNA processing</keyword>
<keyword id="KW-0949">S-adenosyl-L-methionine</keyword>
<keyword id="KW-0808">Transferase</keyword>
<evidence type="ECO:0000255" key="1">
    <source>
        <dbReference type="HAMAP-Rule" id="MF_01007"/>
    </source>
</evidence>
<feature type="chain" id="PRO_0000387041" description="Ribosomal RNA small subunit methyltransferase H">
    <location>
        <begin position="1"/>
        <end position="310"/>
    </location>
</feature>
<feature type="binding site" evidence="1">
    <location>
        <begin position="47"/>
        <end position="49"/>
    </location>
    <ligand>
        <name>S-adenosyl-L-methionine</name>
        <dbReference type="ChEBI" id="CHEBI:59789"/>
    </ligand>
</feature>
<feature type="binding site" evidence="1">
    <location>
        <position position="66"/>
    </location>
    <ligand>
        <name>S-adenosyl-L-methionine</name>
        <dbReference type="ChEBI" id="CHEBI:59789"/>
    </ligand>
</feature>
<feature type="binding site" evidence="1">
    <location>
        <position position="93"/>
    </location>
    <ligand>
        <name>S-adenosyl-L-methionine</name>
        <dbReference type="ChEBI" id="CHEBI:59789"/>
    </ligand>
</feature>
<feature type="binding site" evidence="1">
    <location>
        <position position="108"/>
    </location>
    <ligand>
        <name>S-adenosyl-L-methionine</name>
        <dbReference type="ChEBI" id="CHEBI:59789"/>
    </ligand>
</feature>
<feature type="binding site" evidence="1">
    <location>
        <position position="115"/>
    </location>
    <ligand>
        <name>S-adenosyl-L-methionine</name>
        <dbReference type="ChEBI" id="CHEBI:59789"/>
    </ligand>
</feature>
<proteinExistence type="inferred from homology"/>
<name>RSMH_PROM3</name>
<accession>A2CD93</accession>
<protein>
    <recommendedName>
        <fullName evidence="1">Ribosomal RNA small subunit methyltransferase H</fullName>
        <ecNumber evidence="1">2.1.1.199</ecNumber>
    </recommendedName>
    <alternativeName>
        <fullName evidence="1">16S rRNA m(4)C1402 methyltransferase</fullName>
    </alternativeName>
    <alternativeName>
        <fullName evidence="1">rRNA (cytosine-N(4)-)-methyltransferase RsmH</fullName>
    </alternativeName>
</protein>
<comment type="function">
    <text evidence="1">Specifically methylates the N4 position of cytidine in position 1402 (C1402) of 16S rRNA.</text>
</comment>
<comment type="catalytic activity">
    <reaction evidence="1">
        <text>cytidine(1402) in 16S rRNA + S-adenosyl-L-methionine = N(4)-methylcytidine(1402) in 16S rRNA + S-adenosyl-L-homocysteine + H(+)</text>
        <dbReference type="Rhea" id="RHEA:42928"/>
        <dbReference type="Rhea" id="RHEA-COMP:10286"/>
        <dbReference type="Rhea" id="RHEA-COMP:10287"/>
        <dbReference type="ChEBI" id="CHEBI:15378"/>
        <dbReference type="ChEBI" id="CHEBI:57856"/>
        <dbReference type="ChEBI" id="CHEBI:59789"/>
        <dbReference type="ChEBI" id="CHEBI:74506"/>
        <dbReference type="ChEBI" id="CHEBI:82748"/>
        <dbReference type="EC" id="2.1.1.199"/>
    </reaction>
</comment>
<comment type="subcellular location">
    <subcellularLocation>
        <location evidence="1">Cytoplasm</location>
    </subcellularLocation>
</comment>
<comment type="similarity">
    <text evidence="1">Belongs to the methyltransferase superfamily. RsmH family.</text>
</comment>
<sequence>MPDSSINSDSGFKHLSVMADAVSQPVAALPAELLDGGLMIDATLGGGGHSALLLERHPDLRLIGLDQDPTARAAAAERLALFGDRVKIVATNFVDFSPAEPAVVVMADLGVSSPQLDVAKRGFSFRLDGPLDMRMNPQVGETAAELIGRLEETELADLIYAYGEERLSRRIARRIKHDLAEQGPYAGTAALAYAVAGCYPPKARRGRIHPATRTFQALRIAVNDELDALDRFLQKAPDWLVPGGLLAVISFHSLEDRRVKTAFLRDQRLERLTRKPLVASEMEIAANPRSRSAKCRFARRLPQAMTADAL</sequence>
<organism>
    <name type="scientific">Prochlorococcus marinus (strain MIT 9303)</name>
    <dbReference type="NCBI Taxonomy" id="59922"/>
    <lineage>
        <taxon>Bacteria</taxon>
        <taxon>Bacillati</taxon>
        <taxon>Cyanobacteriota</taxon>
        <taxon>Cyanophyceae</taxon>
        <taxon>Synechococcales</taxon>
        <taxon>Prochlorococcaceae</taxon>
        <taxon>Prochlorococcus</taxon>
    </lineage>
</organism>
<reference key="1">
    <citation type="journal article" date="2007" name="PLoS Genet.">
        <title>Patterns and implications of gene gain and loss in the evolution of Prochlorococcus.</title>
        <authorList>
            <person name="Kettler G.C."/>
            <person name="Martiny A.C."/>
            <person name="Huang K."/>
            <person name="Zucker J."/>
            <person name="Coleman M.L."/>
            <person name="Rodrigue S."/>
            <person name="Chen F."/>
            <person name="Lapidus A."/>
            <person name="Ferriera S."/>
            <person name="Johnson J."/>
            <person name="Steglich C."/>
            <person name="Church G.M."/>
            <person name="Richardson P."/>
            <person name="Chisholm S.W."/>
        </authorList>
    </citation>
    <scope>NUCLEOTIDE SEQUENCE [LARGE SCALE GENOMIC DNA]</scope>
    <source>
        <strain>MIT 9303</strain>
    </source>
</reference>